<feature type="initiator methionine" description="Removed" evidence="3">
    <location>
        <position position="1"/>
    </location>
</feature>
<feature type="chain" id="PRO_0000147516" description="Tetrahydromethanopterin S-methyltransferase subunit B">
    <location>
        <begin position="2"/>
        <end position="108"/>
    </location>
</feature>
<feature type="transmembrane region" description="Helical" evidence="2">
    <location>
        <begin position="81"/>
        <end position="101"/>
    </location>
</feature>
<feature type="sequence conflict" description="In Ref. 1; AAC38333." evidence="4" ref="1">
    <original>T</original>
    <variation>N</variation>
    <location>
        <position position="20"/>
    </location>
</feature>
<feature type="sequence conflict" description="In Ref. 1; AAC38333." evidence="4" ref="1">
    <location>
        <begin position="104"/>
        <end position="108"/>
    </location>
</feature>
<evidence type="ECO:0000250" key="1"/>
<evidence type="ECO:0000255" key="2"/>
<evidence type="ECO:0000269" key="3">
    <source>
    </source>
</evidence>
<evidence type="ECO:0000305" key="4"/>
<organism>
    <name type="scientific">Methanosarcina mazei (strain ATCC BAA-159 / DSM 3647 / Goe1 / Go1 / JCM 11833 / OCM 88)</name>
    <name type="common">Methanosarcina frisia</name>
    <dbReference type="NCBI Taxonomy" id="192952"/>
    <lineage>
        <taxon>Archaea</taxon>
        <taxon>Methanobacteriati</taxon>
        <taxon>Methanobacteriota</taxon>
        <taxon>Stenosarchaea group</taxon>
        <taxon>Methanomicrobia</taxon>
        <taxon>Methanosarcinales</taxon>
        <taxon>Methanosarcinaceae</taxon>
        <taxon>Methanosarcina</taxon>
    </lineage>
</organism>
<sequence length="108" mass="11872">MSIVRIAPEINLVMDTESGTVTQERKDSIQYSMEPVFERVDKLDAIADDLVNSLSPSKPLLNTWPGRENTSYIAGIYSNSFYGIIVGLAFSGLLALIIYITRLMGGVV</sequence>
<gene>
    <name type="primary">mtrB</name>
    <name type="ordered locus">MM_1544</name>
</gene>
<name>MTRB_METMA</name>
<comment type="function">
    <text>Part of a complex that catalyzes the formation of methyl-coenzyme M and tetrahydromethanopterin from coenzyme M and methyl-tetrahydromethanopterin. This is an energy-conserving, sodium-ion translocating step.</text>
</comment>
<comment type="catalytic activity">
    <reaction>
        <text>5-methyl-5,6,7,8-tetrahydromethanopterin + coenzyme M + 2 Na(+)(in) = 5,6,7,8-tetrahydromethanopterin + methyl-coenzyme M + 2 Na(+)(out)</text>
        <dbReference type="Rhea" id="RHEA:53492"/>
        <dbReference type="ChEBI" id="CHEBI:29101"/>
        <dbReference type="ChEBI" id="CHEBI:58103"/>
        <dbReference type="ChEBI" id="CHEBI:58116"/>
        <dbReference type="ChEBI" id="CHEBI:58286"/>
        <dbReference type="ChEBI" id="CHEBI:58319"/>
        <dbReference type="EC" id="7.2.1.4"/>
    </reaction>
</comment>
<comment type="pathway">
    <text>One-carbon metabolism; methanogenesis from CO(2); methyl-coenzyme M from 5,10-methylene-5,6,7,8-tetrahydromethanopterin: step 2/2.</text>
</comment>
<comment type="subunit">
    <text evidence="1">The complex is composed of 8 subunits; MtrA, MtrB, MtrC, MtrD, MtrE, MtrF, MtrG and MtrH.</text>
</comment>
<comment type="subcellular location">
    <subcellularLocation>
        <location evidence="4">Cell membrane</location>
        <topology evidence="4">Single-pass membrane protein</topology>
    </subcellularLocation>
</comment>
<comment type="similarity">
    <text evidence="4">Belongs to the MtrB family.</text>
</comment>
<dbReference type="EC" id="7.2.1.4"/>
<dbReference type="EMBL" id="AF042381">
    <property type="protein sequence ID" value="AAC38333.1"/>
    <property type="molecule type" value="Genomic_DNA"/>
</dbReference>
<dbReference type="EMBL" id="AE008384">
    <property type="protein sequence ID" value="AAM31240.1"/>
    <property type="molecule type" value="Genomic_DNA"/>
</dbReference>
<dbReference type="RefSeq" id="WP_011033490.1">
    <property type="nucleotide sequence ID" value="NC_003901.1"/>
</dbReference>
<dbReference type="SMR" id="P80655"/>
<dbReference type="KEGG" id="mma:MM_1544"/>
<dbReference type="PATRIC" id="fig|192952.21.peg.1785"/>
<dbReference type="eggNOG" id="arCOG04867">
    <property type="taxonomic scope" value="Archaea"/>
</dbReference>
<dbReference type="HOGENOM" id="CLU_171544_1_0_2"/>
<dbReference type="BRENDA" id="2.1.1.86">
    <property type="organism ID" value="3270"/>
</dbReference>
<dbReference type="UniPathway" id="UPA00640">
    <property type="reaction ID" value="UER00698"/>
</dbReference>
<dbReference type="Proteomes" id="UP000000595">
    <property type="component" value="Chromosome"/>
</dbReference>
<dbReference type="GO" id="GO:0005886">
    <property type="term" value="C:plasma membrane"/>
    <property type="evidence" value="ECO:0007669"/>
    <property type="project" value="UniProtKB-SubCell"/>
</dbReference>
<dbReference type="GO" id="GO:0030269">
    <property type="term" value="F:tetrahydromethanopterin S-methyltransferase activity"/>
    <property type="evidence" value="ECO:0007669"/>
    <property type="project" value="UniProtKB-UniRule"/>
</dbReference>
<dbReference type="GO" id="GO:0019386">
    <property type="term" value="P:methanogenesis, from carbon dioxide"/>
    <property type="evidence" value="ECO:0007669"/>
    <property type="project" value="UniProtKB-UniRule"/>
</dbReference>
<dbReference type="GO" id="GO:0032259">
    <property type="term" value="P:methylation"/>
    <property type="evidence" value="ECO:0007669"/>
    <property type="project" value="UniProtKB-KW"/>
</dbReference>
<dbReference type="GO" id="GO:0006730">
    <property type="term" value="P:one-carbon metabolic process"/>
    <property type="evidence" value="ECO:0007669"/>
    <property type="project" value="UniProtKB-UniRule"/>
</dbReference>
<dbReference type="HAMAP" id="MF_01094">
    <property type="entry name" value="MtrB"/>
    <property type="match status" value="1"/>
</dbReference>
<dbReference type="InterPro" id="IPR008690">
    <property type="entry name" value="MtrB_MeTrfase"/>
</dbReference>
<dbReference type="NCBIfam" id="TIGR04166">
    <property type="entry name" value="methano_MtrB"/>
    <property type="match status" value="1"/>
</dbReference>
<dbReference type="NCBIfam" id="NF002129">
    <property type="entry name" value="PRK00965.1"/>
    <property type="match status" value="1"/>
</dbReference>
<dbReference type="Pfam" id="PF05440">
    <property type="entry name" value="MtrB"/>
    <property type="match status" value="1"/>
</dbReference>
<dbReference type="PIRSF" id="PIRSF005518">
    <property type="entry name" value="MtrB"/>
    <property type="match status" value="1"/>
</dbReference>
<reference key="1">
    <citation type="journal article" date="1998" name="FEBS Lett.">
        <title>Cloning, sequencing and expression of the genes encoding the sodium translocating N5-methyltetrahydromethanopterin:coenzyme M methyltransferase of the methylotrophic archaeon Methanosarcina mazei Go1.</title>
        <authorList>
            <person name="Lienard T."/>
            <person name="Gottschalk G."/>
        </authorList>
    </citation>
    <scope>NUCLEOTIDE SEQUENCE [GENOMIC DNA]</scope>
    <source>
        <strain>ATCC BAA-159 / DSM 3647 / Goe1 / Go1 / JCM 11833 / OCM 88</strain>
    </source>
</reference>
<reference key="2">
    <citation type="journal article" date="2002" name="J. Mol. Microbiol. Biotechnol.">
        <title>The genome of Methanosarcina mazei: evidence for lateral gene transfer between Bacteria and Archaea.</title>
        <authorList>
            <person name="Deppenmeier U."/>
            <person name="Johann A."/>
            <person name="Hartsch T."/>
            <person name="Merkl R."/>
            <person name="Schmitz R.A."/>
            <person name="Martinez-Arias R."/>
            <person name="Henne A."/>
            <person name="Wiezer A."/>
            <person name="Baeumer S."/>
            <person name="Jacobi C."/>
            <person name="Brueggemann H."/>
            <person name="Lienard T."/>
            <person name="Christmann A."/>
            <person name="Boemecke M."/>
            <person name="Steckel S."/>
            <person name="Bhattacharyya A."/>
            <person name="Lykidis A."/>
            <person name="Overbeek R."/>
            <person name="Klenk H.-P."/>
            <person name="Gunsalus R.P."/>
            <person name="Fritz H.-J."/>
            <person name="Gottschalk G."/>
        </authorList>
    </citation>
    <scope>NUCLEOTIDE SEQUENCE [LARGE SCALE GENOMIC DNA]</scope>
    <source>
        <strain>ATCC BAA-159 / DSM 3647 / Goe1 / Go1 / JCM 11833 / OCM 88</strain>
    </source>
</reference>
<reference key="3">
    <citation type="journal article" date="1996" name="Eur. J. Biochem.">
        <title>Sodium ion translocation by N5-methyltetrahydromethanopterin: coenzyme M methyltransferase from Methanosarcina mazei Go1 reconstituted in ether lipid liposomes.</title>
        <authorList>
            <person name="Lienard T."/>
            <person name="Becher B."/>
            <person name="Marschall M."/>
            <person name="Bowien S."/>
            <person name="Gottschalk G."/>
        </authorList>
    </citation>
    <scope>PROTEIN SEQUENCE OF 2-16</scope>
    <source>
        <strain>ATCC BAA-159 / DSM 3647 / Goe1 / Go1 / JCM 11833 / OCM 88</strain>
    </source>
</reference>
<keyword id="KW-1003">Cell membrane</keyword>
<keyword id="KW-0903">Direct protein sequencing</keyword>
<keyword id="KW-0472">Membrane</keyword>
<keyword id="KW-0484">Methanogenesis</keyword>
<keyword id="KW-0489">Methyltransferase</keyword>
<keyword id="KW-0554">One-carbon metabolism</keyword>
<keyword id="KW-0808">Transferase</keyword>
<keyword id="KW-1278">Translocase</keyword>
<keyword id="KW-0812">Transmembrane</keyword>
<keyword id="KW-1133">Transmembrane helix</keyword>
<protein>
    <recommendedName>
        <fullName>Tetrahydromethanopterin S-methyltransferase subunit B</fullName>
        <ecNumber>7.2.1.4</ecNumber>
    </recommendedName>
    <alternativeName>
        <fullName>N5-methyltetrahydromethanopterin--coenzyme M methyltransferase subunit B</fullName>
    </alternativeName>
</protein>
<accession>P80655</accession>
<accession>O59639</accession>
<proteinExistence type="evidence at protein level"/>